<organism>
    <name type="scientific">Candida glabrata (strain ATCC 2001 / BCRC 20586 / JCM 3761 / NBRC 0622 / NRRL Y-65 / CBS 138)</name>
    <name type="common">Yeast</name>
    <name type="synonym">Nakaseomyces glabratus</name>
    <dbReference type="NCBI Taxonomy" id="284593"/>
    <lineage>
        <taxon>Eukaryota</taxon>
        <taxon>Fungi</taxon>
        <taxon>Dikarya</taxon>
        <taxon>Ascomycota</taxon>
        <taxon>Saccharomycotina</taxon>
        <taxon>Saccharomycetes</taxon>
        <taxon>Saccharomycetales</taxon>
        <taxon>Saccharomycetaceae</taxon>
        <taxon>Nakaseomyces</taxon>
    </lineage>
</organism>
<feature type="chain" id="PRO_0000155130" description="Protein SEY1">
    <location>
        <begin position="1"/>
        <end position="783"/>
    </location>
</feature>
<feature type="topological domain" description="Cytoplasmic" evidence="1">
    <location>
        <begin position="1"/>
        <end position="677"/>
    </location>
</feature>
<feature type="transmembrane region" description="Helical" evidence="1">
    <location>
        <begin position="678"/>
        <end position="698"/>
    </location>
</feature>
<feature type="topological domain" description="Lumenal" evidence="1">
    <location>
        <begin position="699"/>
        <end position="701"/>
    </location>
</feature>
<feature type="transmembrane region" description="Helical" evidence="1">
    <location>
        <begin position="702"/>
        <end position="722"/>
    </location>
</feature>
<feature type="topological domain" description="Cytoplasmic" evidence="1">
    <location>
        <begin position="723"/>
        <end position="783"/>
    </location>
</feature>
<feature type="domain" description="GB1/RHD3-type G" evidence="2">
    <location>
        <begin position="33"/>
        <end position="265"/>
    </location>
</feature>
<feature type="coiled-coil region" evidence="1">
    <location>
        <begin position="449"/>
        <end position="472"/>
    </location>
</feature>
<feature type="binding site" evidence="1">
    <location>
        <begin position="43"/>
        <end position="50"/>
    </location>
    <ligand>
        <name>GTP</name>
        <dbReference type="ChEBI" id="CHEBI:37565"/>
    </ligand>
</feature>
<dbReference type="EC" id="3.6.5.-" evidence="1"/>
<dbReference type="EMBL" id="CR380958">
    <property type="protein sequence ID" value="CAG61939.1"/>
    <property type="molecule type" value="Genomic_DNA"/>
</dbReference>
<dbReference type="RefSeq" id="XP_448969.1">
    <property type="nucleotide sequence ID" value="XM_448969.1"/>
</dbReference>
<dbReference type="SMR" id="Q6FLC5"/>
<dbReference type="FunCoup" id="Q6FLC5">
    <property type="interactions" value="72"/>
</dbReference>
<dbReference type="STRING" id="284593.Q6FLC5"/>
<dbReference type="EnsemblFungi" id="CAGL0L04466g-T">
    <property type="protein sequence ID" value="CAGL0L04466g-T-p1"/>
    <property type="gene ID" value="CAGL0L04466g"/>
</dbReference>
<dbReference type="KEGG" id="cgr:2890639"/>
<dbReference type="CGD" id="CAL0135064">
    <property type="gene designation" value="CAGL0L04466g"/>
</dbReference>
<dbReference type="VEuPathDB" id="FungiDB:CAGL0L04466g"/>
<dbReference type="eggNOG" id="KOG2203">
    <property type="taxonomic scope" value="Eukaryota"/>
</dbReference>
<dbReference type="HOGENOM" id="CLU_011270_0_0_1"/>
<dbReference type="InParanoid" id="Q6FLC5"/>
<dbReference type="OMA" id="PIIKMTE"/>
<dbReference type="Proteomes" id="UP000002428">
    <property type="component" value="Chromosome L"/>
</dbReference>
<dbReference type="GO" id="GO:0032541">
    <property type="term" value="C:cortical endoplasmic reticulum"/>
    <property type="evidence" value="ECO:0007669"/>
    <property type="project" value="EnsemblFungi"/>
</dbReference>
<dbReference type="GO" id="GO:0005789">
    <property type="term" value="C:endoplasmic reticulum membrane"/>
    <property type="evidence" value="ECO:0007669"/>
    <property type="project" value="UniProtKB-SubCell"/>
</dbReference>
<dbReference type="GO" id="GO:0005525">
    <property type="term" value="F:GTP binding"/>
    <property type="evidence" value="ECO:0007669"/>
    <property type="project" value="UniProtKB-UniRule"/>
</dbReference>
<dbReference type="GO" id="GO:0003924">
    <property type="term" value="F:GTPase activity"/>
    <property type="evidence" value="ECO:0007669"/>
    <property type="project" value="UniProtKB-UniRule"/>
</dbReference>
<dbReference type="GO" id="GO:0048309">
    <property type="term" value="P:endoplasmic reticulum inheritance"/>
    <property type="evidence" value="ECO:0007669"/>
    <property type="project" value="EnsemblFungi"/>
</dbReference>
<dbReference type="GO" id="GO:0016320">
    <property type="term" value="P:endoplasmic reticulum membrane fusion"/>
    <property type="evidence" value="ECO:0007669"/>
    <property type="project" value="EnsemblFungi"/>
</dbReference>
<dbReference type="CDD" id="cd01851">
    <property type="entry name" value="GBP"/>
    <property type="match status" value="1"/>
</dbReference>
<dbReference type="FunFam" id="3.40.50.300:FF:000727">
    <property type="entry name" value="Protein SEY1 homolog"/>
    <property type="match status" value="1"/>
</dbReference>
<dbReference type="Gene3D" id="3.40.50.300">
    <property type="entry name" value="P-loop containing nucleotide triphosphate hydrolases"/>
    <property type="match status" value="1"/>
</dbReference>
<dbReference type="HAMAP" id="MF_03109">
    <property type="entry name" value="Sey1"/>
    <property type="match status" value="1"/>
</dbReference>
<dbReference type="InterPro" id="IPR030386">
    <property type="entry name" value="G_GB1_RHD3_dom"/>
</dbReference>
<dbReference type="InterPro" id="IPR027417">
    <property type="entry name" value="P-loop_NTPase"/>
</dbReference>
<dbReference type="InterPro" id="IPR008803">
    <property type="entry name" value="RHD3/Sey1"/>
</dbReference>
<dbReference type="InterPro" id="IPR046758">
    <property type="entry name" value="Sey1/RHD3-like_3HB"/>
</dbReference>
<dbReference type="PANTHER" id="PTHR45923">
    <property type="entry name" value="PROTEIN SEY1"/>
    <property type="match status" value="1"/>
</dbReference>
<dbReference type="PANTHER" id="PTHR45923:SF2">
    <property type="entry name" value="PROTEIN SEY1"/>
    <property type="match status" value="1"/>
</dbReference>
<dbReference type="Pfam" id="PF05879">
    <property type="entry name" value="RHD3_GTPase"/>
    <property type="match status" value="1"/>
</dbReference>
<dbReference type="Pfam" id="PF20428">
    <property type="entry name" value="Sey1_3HB"/>
    <property type="match status" value="1"/>
</dbReference>
<dbReference type="SUPFAM" id="SSF52540">
    <property type="entry name" value="P-loop containing nucleoside triphosphate hydrolases"/>
    <property type="match status" value="1"/>
</dbReference>
<dbReference type="PROSITE" id="PS51715">
    <property type="entry name" value="G_GB1_RHD3"/>
    <property type="match status" value="1"/>
</dbReference>
<accession>Q6FLC5</accession>
<sequence>MTSQAIQLIDVNKEYNKESLEYFKQCVGTRDVGFNYHVISVFGSQSSGKSTLLNILFNTQFDTMDAQVKRQQTTKGIWLAHTQNVNNHKSTTDTDSDYFILDVEGSDGAERGEDQDFERKAALFAISVSEVLIVNMWEQQIGLYQGNNMGLLKTVFEVNLSLFGKRGNDHKVLLLFVIRDHVGVTPLKSLQESLITELEQIWSELNKPTGCEETTLYDFFDLEFKGLGHKLLQEEQFYDDVKSLGDSFIDSESNEYLLKPNYHHKLPIDGWNMYAEQCWEQIENNRDLDLPTQQILVARFKTEDIANEAYAKFTEEYETETEKRINDKTELVSYLKKIKDECLGEYDEHASRYAKAVYEEKRIELVDKVNERLFTTASKYLDMLTAVLLTKLENGMKEKENIKLPFEDRYLKLFKDIEAEFDAAITEFFSKDLLTKIKDFELKFAADVHEKKLQLRESELNALLSKIKKQLTLRIKDEEIELLSKPTPDLWDKVTDTFENIMKKTLSRFATGEGEYEFKMGLSEDENKKQYHAIRAFAWTLLETVVHDYLKEDTIVSLLRDRFESKFRYDSNDVPRLWKNEDEIDQSFRVAKEHALEILDILTLAVKTDGTEVIPDAFEDEPNEGLIYDDSHDVYHSNRFAHILNETQKEKVQQQFRRQINVTVLDCKRSIVTSSTHIPIWIYAVIVVLGWNEFMIVIRNPLFVTLALLSIVSFYFIQKFGLWGPVMNVVNTALGESRTTIKEKLRQFVLEEHELKKTAKVEEEIELQDLSKNSSSSGNEDSD</sequence>
<comment type="function">
    <text evidence="1">Cooperates with the reticulon proteins and tubule-shaping DP1 family proteins to generate and maintain the structure of the tubular endoplasmic reticulum network. Has GTPase activity, which is required for its function in ER organization.</text>
</comment>
<comment type="subcellular location">
    <subcellularLocation>
        <location evidence="1">Endoplasmic reticulum membrane</location>
        <topology evidence="1">Multi-pass membrane protein</topology>
    </subcellularLocation>
    <text evidence="1">Enriched in the cortical ER. Concentrated in punctae along the ER tubules.</text>
</comment>
<comment type="similarity">
    <text evidence="2">Belongs to the TRAFAC class dynamin-like GTPase superfamily. GB1/RHD3 GTPase family. RHD3 subfamily.</text>
</comment>
<proteinExistence type="inferred from homology"/>
<reference key="1">
    <citation type="journal article" date="2004" name="Nature">
        <title>Genome evolution in yeasts.</title>
        <authorList>
            <person name="Dujon B."/>
            <person name="Sherman D."/>
            <person name="Fischer G."/>
            <person name="Durrens P."/>
            <person name="Casaregola S."/>
            <person name="Lafontaine I."/>
            <person name="de Montigny J."/>
            <person name="Marck C."/>
            <person name="Neuveglise C."/>
            <person name="Talla E."/>
            <person name="Goffard N."/>
            <person name="Frangeul L."/>
            <person name="Aigle M."/>
            <person name="Anthouard V."/>
            <person name="Babour A."/>
            <person name="Barbe V."/>
            <person name="Barnay S."/>
            <person name="Blanchin S."/>
            <person name="Beckerich J.-M."/>
            <person name="Beyne E."/>
            <person name="Bleykasten C."/>
            <person name="Boisrame A."/>
            <person name="Boyer J."/>
            <person name="Cattolico L."/>
            <person name="Confanioleri F."/>
            <person name="de Daruvar A."/>
            <person name="Despons L."/>
            <person name="Fabre E."/>
            <person name="Fairhead C."/>
            <person name="Ferry-Dumazet H."/>
            <person name="Groppi A."/>
            <person name="Hantraye F."/>
            <person name="Hennequin C."/>
            <person name="Jauniaux N."/>
            <person name="Joyet P."/>
            <person name="Kachouri R."/>
            <person name="Kerrest A."/>
            <person name="Koszul R."/>
            <person name="Lemaire M."/>
            <person name="Lesur I."/>
            <person name="Ma L."/>
            <person name="Muller H."/>
            <person name="Nicaud J.-M."/>
            <person name="Nikolski M."/>
            <person name="Oztas S."/>
            <person name="Ozier-Kalogeropoulos O."/>
            <person name="Pellenz S."/>
            <person name="Potier S."/>
            <person name="Richard G.-F."/>
            <person name="Straub M.-L."/>
            <person name="Suleau A."/>
            <person name="Swennen D."/>
            <person name="Tekaia F."/>
            <person name="Wesolowski-Louvel M."/>
            <person name="Westhof E."/>
            <person name="Wirth B."/>
            <person name="Zeniou-Meyer M."/>
            <person name="Zivanovic Y."/>
            <person name="Bolotin-Fukuhara M."/>
            <person name="Thierry A."/>
            <person name="Bouchier C."/>
            <person name="Caudron B."/>
            <person name="Scarpelli C."/>
            <person name="Gaillardin C."/>
            <person name="Weissenbach J."/>
            <person name="Wincker P."/>
            <person name="Souciet J.-L."/>
        </authorList>
    </citation>
    <scope>NUCLEOTIDE SEQUENCE [LARGE SCALE GENOMIC DNA]</scope>
    <source>
        <strain>ATCC 2001 / BCRC 20586 / JCM 3761 / NBRC 0622 / NRRL Y-65 / CBS 138</strain>
    </source>
</reference>
<name>SEY1_CANGA</name>
<gene>
    <name evidence="1" type="primary">SEY1</name>
    <name type="ordered locus">CAGL0L04466g</name>
</gene>
<evidence type="ECO:0000255" key="1">
    <source>
        <dbReference type="HAMAP-Rule" id="MF_03109"/>
    </source>
</evidence>
<evidence type="ECO:0000255" key="2">
    <source>
        <dbReference type="PROSITE-ProRule" id="PRU01052"/>
    </source>
</evidence>
<protein>
    <recommendedName>
        <fullName evidence="1">Protein SEY1</fullName>
        <ecNumber evidence="1">3.6.5.-</ecNumber>
    </recommendedName>
</protein>
<keyword id="KW-0175">Coiled coil</keyword>
<keyword id="KW-0256">Endoplasmic reticulum</keyword>
<keyword id="KW-0342">GTP-binding</keyword>
<keyword id="KW-0378">Hydrolase</keyword>
<keyword id="KW-0472">Membrane</keyword>
<keyword id="KW-0547">Nucleotide-binding</keyword>
<keyword id="KW-1185">Reference proteome</keyword>
<keyword id="KW-0812">Transmembrane</keyword>
<keyword id="KW-1133">Transmembrane helix</keyword>